<dbReference type="EC" id="3.1.26.11" evidence="1"/>
<dbReference type="EMBL" id="BX950229">
    <property type="protein sequence ID" value="CAF30462.1"/>
    <property type="molecule type" value="Genomic_DNA"/>
</dbReference>
<dbReference type="RefSeq" id="WP_011170850.1">
    <property type="nucleotide sequence ID" value="NC_005791.1"/>
</dbReference>
<dbReference type="SMR" id="Q6LYT2"/>
<dbReference type="STRING" id="267377.MMP0906"/>
<dbReference type="EnsemblBacteria" id="CAF30462">
    <property type="protein sequence ID" value="CAF30462"/>
    <property type="gene ID" value="MMP0906"/>
</dbReference>
<dbReference type="GeneID" id="2761836"/>
<dbReference type="KEGG" id="mmp:MMP0906"/>
<dbReference type="PATRIC" id="fig|267377.15.peg.934"/>
<dbReference type="eggNOG" id="arCOG00501">
    <property type="taxonomic scope" value="Archaea"/>
</dbReference>
<dbReference type="HOGENOM" id="CLU_031317_2_1_2"/>
<dbReference type="OrthoDB" id="85118at2157"/>
<dbReference type="Proteomes" id="UP000000590">
    <property type="component" value="Chromosome"/>
</dbReference>
<dbReference type="GO" id="GO:0042781">
    <property type="term" value="F:3'-tRNA processing endoribonuclease activity"/>
    <property type="evidence" value="ECO:0007669"/>
    <property type="project" value="UniProtKB-UniRule"/>
</dbReference>
<dbReference type="GO" id="GO:0008270">
    <property type="term" value="F:zinc ion binding"/>
    <property type="evidence" value="ECO:0007669"/>
    <property type="project" value="UniProtKB-UniRule"/>
</dbReference>
<dbReference type="CDD" id="cd07717">
    <property type="entry name" value="RNaseZ_ZiPD-like_MBL-fold"/>
    <property type="match status" value="1"/>
</dbReference>
<dbReference type="Gene3D" id="3.60.15.10">
    <property type="entry name" value="Ribonuclease Z/Hydroxyacylglutathione hydrolase-like"/>
    <property type="match status" value="1"/>
</dbReference>
<dbReference type="HAMAP" id="MF_01818">
    <property type="entry name" value="RNase_Z_BN"/>
    <property type="match status" value="1"/>
</dbReference>
<dbReference type="InterPro" id="IPR001279">
    <property type="entry name" value="Metallo-B-lactamas"/>
</dbReference>
<dbReference type="InterPro" id="IPR036866">
    <property type="entry name" value="RibonucZ/Hydroxyglut_hydro"/>
</dbReference>
<dbReference type="InterPro" id="IPR013471">
    <property type="entry name" value="RNase_Z/BN"/>
</dbReference>
<dbReference type="NCBIfam" id="NF000801">
    <property type="entry name" value="PRK00055.1-3"/>
    <property type="match status" value="1"/>
</dbReference>
<dbReference type="NCBIfam" id="TIGR02651">
    <property type="entry name" value="RNase_Z"/>
    <property type="match status" value="1"/>
</dbReference>
<dbReference type="PANTHER" id="PTHR46018">
    <property type="entry name" value="ZINC PHOSPHODIESTERASE ELAC PROTEIN 1"/>
    <property type="match status" value="1"/>
</dbReference>
<dbReference type="PANTHER" id="PTHR46018:SF2">
    <property type="entry name" value="ZINC PHOSPHODIESTERASE ELAC PROTEIN 1"/>
    <property type="match status" value="1"/>
</dbReference>
<dbReference type="Pfam" id="PF00753">
    <property type="entry name" value="Lactamase_B"/>
    <property type="match status" value="1"/>
</dbReference>
<dbReference type="SUPFAM" id="SSF56281">
    <property type="entry name" value="Metallo-hydrolase/oxidoreductase"/>
    <property type="match status" value="1"/>
</dbReference>
<sequence>MKITFLGTGAAIPTKYRAHPSISLKFDGEIFLFDCGENTQRQIIFTDVSPMKINNIFITHLHGDHVLGLPGLLQSIAFQGRKKPLNIYGPAETVKMIEHILGVGYHSIDYPINVHEISSKTPERIIFTNNYEVFSYPVVHSVPALAYVFKQVKKPRMDLEKVKKLGIEIGPDLKRLKDGFNVELNGEIITLNDVTLPPKKGICVGYSGDTIPLKEFAEFLKELKCNTLIHEATFDKTMERNAKETLHSTATDALNIAKLSGVSTVLLTHISARYDNLNAFENEIVEFKAENPEIHVLIAEDLMEYSLK</sequence>
<comment type="function">
    <text evidence="1">Zinc phosphodiesterase, which displays some tRNA 3'-processing endonuclease activity. Probably involved in tRNA maturation, by removing a 3'-trailer from precursor tRNA.</text>
</comment>
<comment type="catalytic activity">
    <reaction evidence="1">
        <text>Endonucleolytic cleavage of RNA, removing extra 3' nucleotides from tRNA precursor, generating 3' termini of tRNAs. A 3'-hydroxy group is left at the tRNA terminus and a 5'-phosphoryl group is left at the trailer molecule.</text>
        <dbReference type="EC" id="3.1.26.11"/>
    </reaction>
</comment>
<comment type="cofactor">
    <cofactor evidence="1">
        <name>Zn(2+)</name>
        <dbReference type="ChEBI" id="CHEBI:29105"/>
    </cofactor>
    <text evidence="1">Binds 2 Zn(2+) ions.</text>
</comment>
<comment type="subunit">
    <text evidence="1">Homodimer.</text>
</comment>
<comment type="similarity">
    <text evidence="1">Belongs to the RNase Z family.</text>
</comment>
<organism>
    <name type="scientific">Methanococcus maripaludis (strain DSM 14266 / JCM 13030 / NBRC 101832 / S2 / LL)</name>
    <dbReference type="NCBI Taxonomy" id="267377"/>
    <lineage>
        <taxon>Archaea</taxon>
        <taxon>Methanobacteriati</taxon>
        <taxon>Methanobacteriota</taxon>
        <taxon>Methanomada group</taxon>
        <taxon>Methanococci</taxon>
        <taxon>Methanococcales</taxon>
        <taxon>Methanococcaceae</taxon>
        <taxon>Methanococcus</taxon>
    </lineage>
</organism>
<name>RNZ_METMP</name>
<gene>
    <name evidence="1" type="primary">rnz</name>
    <name type="ordered locus">MMP0906</name>
</gene>
<reference key="1">
    <citation type="journal article" date="2004" name="J. Bacteriol.">
        <title>Complete genome sequence of the genetically tractable hydrogenotrophic methanogen Methanococcus maripaludis.</title>
        <authorList>
            <person name="Hendrickson E.L."/>
            <person name="Kaul R."/>
            <person name="Zhou Y."/>
            <person name="Bovee D."/>
            <person name="Chapman P."/>
            <person name="Chung J."/>
            <person name="Conway de Macario E."/>
            <person name="Dodsworth J.A."/>
            <person name="Gillett W."/>
            <person name="Graham D.E."/>
            <person name="Hackett M."/>
            <person name="Haydock A.K."/>
            <person name="Kang A."/>
            <person name="Land M.L."/>
            <person name="Levy R."/>
            <person name="Lie T.J."/>
            <person name="Major T.A."/>
            <person name="Moore B.C."/>
            <person name="Porat I."/>
            <person name="Palmeiri A."/>
            <person name="Rouse G."/>
            <person name="Saenphimmachak C."/>
            <person name="Soell D."/>
            <person name="Van Dien S."/>
            <person name="Wang T."/>
            <person name="Whitman W.B."/>
            <person name="Xia Q."/>
            <person name="Zhang Y."/>
            <person name="Larimer F.W."/>
            <person name="Olson M.V."/>
            <person name="Leigh J.A."/>
        </authorList>
    </citation>
    <scope>NUCLEOTIDE SEQUENCE [LARGE SCALE GENOMIC DNA]</scope>
    <source>
        <strain>DSM 14266 / JCM 13030 / NBRC 101832 / S2 / LL</strain>
    </source>
</reference>
<feature type="chain" id="PRO_0000155927" description="Ribonuclease Z">
    <location>
        <begin position="1"/>
        <end position="308"/>
    </location>
</feature>
<feature type="active site" description="Proton acceptor" evidence="1">
    <location>
        <position position="64"/>
    </location>
</feature>
<feature type="binding site" evidence="1">
    <location>
        <position position="60"/>
    </location>
    <ligand>
        <name>Zn(2+)</name>
        <dbReference type="ChEBI" id="CHEBI:29105"/>
        <label>1</label>
        <note>catalytic</note>
    </ligand>
</feature>
<feature type="binding site" evidence="1">
    <location>
        <position position="62"/>
    </location>
    <ligand>
        <name>Zn(2+)</name>
        <dbReference type="ChEBI" id="CHEBI:29105"/>
        <label>1</label>
        <note>catalytic</note>
    </ligand>
</feature>
<feature type="binding site" evidence="1">
    <location>
        <position position="64"/>
    </location>
    <ligand>
        <name>Zn(2+)</name>
        <dbReference type="ChEBI" id="CHEBI:29105"/>
        <label>2</label>
        <note>catalytic</note>
    </ligand>
</feature>
<feature type="binding site" evidence="1">
    <location>
        <position position="65"/>
    </location>
    <ligand>
        <name>Zn(2+)</name>
        <dbReference type="ChEBI" id="CHEBI:29105"/>
        <label>2</label>
        <note>catalytic</note>
    </ligand>
</feature>
<feature type="binding site" evidence="1">
    <location>
        <position position="140"/>
    </location>
    <ligand>
        <name>Zn(2+)</name>
        <dbReference type="ChEBI" id="CHEBI:29105"/>
        <label>1</label>
        <note>catalytic</note>
    </ligand>
</feature>
<feature type="binding site" evidence="1">
    <location>
        <position position="209"/>
    </location>
    <ligand>
        <name>Zn(2+)</name>
        <dbReference type="ChEBI" id="CHEBI:29105"/>
        <label>1</label>
        <note>catalytic</note>
    </ligand>
</feature>
<feature type="binding site" evidence="1">
    <location>
        <position position="209"/>
    </location>
    <ligand>
        <name>Zn(2+)</name>
        <dbReference type="ChEBI" id="CHEBI:29105"/>
        <label>2</label>
        <note>catalytic</note>
    </ligand>
</feature>
<feature type="binding site" evidence="1">
    <location>
        <position position="269"/>
    </location>
    <ligand>
        <name>Zn(2+)</name>
        <dbReference type="ChEBI" id="CHEBI:29105"/>
        <label>2</label>
        <note>catalytic</note>
    </ligand>
</feature>
<accession>Q6LYT2</accession>
<evidence type="ECO:0000255" key="1">
    <source>
        <dbReference type="HAMAP-Rule" id="MF_01818"/>
    </source>
</evidence>
<proteinExistence type="inferred from homology"/>
<protein>
    <recommendedName>
        <fullName evidence="1">Ribonuclease Z</fullName>
        <shortName evidence="1">RNase Z</shortName>
        <ecNumber evidence="1">3.1.26.11</ecNumber>
    </recommendedName>
    <alternativeName>
        <fullName evidence="1">tRNA 3 endonuclease</fullName>
    </alternativeName>
    <alternativeName>
        <fullName evidence="1">tRNase Z</fullName>
    </alternativeName>
</protein>
<keyword id="KW-0255">Endonuclease</keyword>
<keyword id="KW-0378">Hydrolase</keyword>
<keyword id="KW-0479">Metal-binding</keyword>
<keyword id="KW-0540">Nuclease</keyword>
<keyword id="KW-1185">Reference proteome</keyword>
<keyword id="KW-0819">tRNA processing</keyword>
<keyword id="KW-0862">Zinc</keyword>